<sequence length="235" mass="25394">MAGLAVNVDHVATLRQARGVDYPDPVAAAVLVELAGADGVVVHLREDRRHIQDRDVRIIRQIVQSKLILEMAATPEMIGIALEVRPHQATLVPEKREEVTTEGGLDVVMHKDSVADAIKTLQAGGIKVSLFVDPDLNQIKAAHKAGADVVELHTGDFCESRSPKAMAAIQEAARLARKVGMEVHAGHGIDFRSIQDFVGVKEIQEFSIGHSIVSRAVFIGLDAAVKEMMALARQV</sequence>
<comment type="function">
    <text evidence="1">Catalyzes the complicated ring closure reaction between the two acyclic compounds 1-deoxy-D-xylulose-5-phosphate (DXP) and 3-amino-2-oxopropyl phosphate (1-amino-acetone-3-phosphate or AAP) to form pyridoxine 5'-phosphate (PNP) and inorganic phosphate.</text>
</comment>
<comment type="catalytic activity">
    <reaction evidence="1">
        <text>3-amino-2-oxopropyl phosphate + 1-deoxy-D-xylulose 5-phosphate = pyridoxine 5'-phosphate + phosphate + 2 H2O + H(+)</text>
        <dbReference type="Rhea" id="RHEA:15265"/>
        <dbReference type="ChEBI" id="CHEBI:15377"/>
        <dbReference type="ChEBI" id="CHEBI:15378"/>
        <dbReference type="ChEBI" id="CHEBI:43474"/>
        <dbReference type="ChEBI" id="CHEBI:57279"/>
        <dbReference type="ChEBI" id="CHEBI:57792"/>
        <dbReference type="ChEBI" id="CHEBI:58589"/>
        <dbReference type="EC" id="2.6.99.2"/>
    </reaction>
</comment>
<comment type="pathway">
    <text evidence="1">Cofactor biosynthesis; pyridoxine 5'-phosphate biosynthesis; pyridoxine 5'-phosphate from D-erythrose 4-phosphate: step 5/5.</text>
</comment>
<comment type="subunit">
    <text evidence="1">Homooctamer; tetramer of dimers.</text>
</comment>
<comment type="subcellular location">
    <subcellularLocation>
        <location evidence="1">Cytoplasm</location>
    </subcellularLocation>
</comment>
<comment type="similarity">
    <text evidence="1">Belongs to the PNP synthase family.</text>
</comment>
<feature type="chain" id="PRO_1000119379" description="Pyridoxine 5'-phosphate synthase">
    <location>
        <begin position="1"/>
        <end position="235"/>
    </location>
</feature>
<feature type="active site" description="Proton acceptor" evidence="1">
    <location>
        <position position="43"/>
    </location>
</feature>
<feature type="active site" description="Proton acceptor" evidence="1">
    <location>
        <position position="70"/>
    </location>
</feature>
<feature type="active site" description="Proton donor" evidence="1">
    <location>
        <position position="187"/>
    </location>
</feature>
<feature type="binding site" evidence="1">
    <location>
        <position position="7"/>
    </location>
    <ligand>
        <name>3-amino-2-oxopropyl phosphate</name>
        <dbReference type="ChEBI" id="CHEBI:57279"/>
    </ligand>
</feature>
<feature type="binding site" evidence="1">
    <location>
        <begin position="9"/>
        <end position="10"/>
    </location>
    <ligand>
        <name>1-deoxy-D-xylulose 5-phosphate</name>
        <dbReference type="ChEBI" id="CHEBI:57792"/>
    </ligand>
</feature>
<feature type="binding site" evidence="1">
    <location>
        <position position="18"/>
    </location>
    <ligand>
        <name>3-amino-2-oxopropyl phosphate</name>
        <dbReference type="ChEBI" id="CHEBI:57279"/>
    </ligand>
</feature>
<feature type="binding site" evidence="1">
    <location>
        <position position="45"/>
    </location>
    <ligand>
        <name>1-deoxy-D-xylulose 5-phosphate</name>
        <dbReference type="ChEBI" id="CHEBI:57792"/>
    </ligand>
</feature>
<feature type="binding site" evidence="1">
    <location>
        <position position="50"/>
    </location>
    <ligand>
        <name>1-deoxy-D-xylulose 5-phosphate</name>
        <dbReference type="ChEBI" id="CHEBI:57792"/>
    </ligand>
</feature>
<feature type="binding site" evidence="1">
    <location>
        <position position="100"/>
    </location>
    <ligand>
        <name>1-deoxy-D-xylulose 5-phosphate</name>
        <dbReference type="ChEBI" id="CHEBI:57792"/>
    </ligand>
</feature>
<feature type="binding site" evidence="1">
    <location>
        <position position="188"/>
    </location>
    <ligand>
        <name>3-amino-2-oxopropyl phosphate</name>
        <dbReference type="ChEBI" id="CHEBI:57279"/>
    </ligand>
</feature>
<feature type="binding site" evidence="1">
    <location>
        <begin position="209"/>
        <end position="210"/>
    </location>
    <ligand>
        <name>3-amino-2-oxopropyl phosphate</name>
        <dbReference type="ChEBI" id="CHEBI:57279"/>
    </ligand>
</feature>
<feature type="site" description="Transition state stabilizer" evidence="1">
    <location>
        <position position="151"/>
    </location>
</feature>
<proteinExistence type="inferred from homology"/>
<evidence type="ECO:0000255" key="1">
    <source>
        <dbReference type="HAMAP-Rule" id="MF_00279"/>
    </source>
</evidence>
<name>PDXJ_DESAL</name>
<accession>B8FJ89</accession>
<protein>
    <recommendedName>
        <fullName evidence="1">Pyridoxine 5'-phosphate synthase</fullName>
        <shortName evidence="1">PNP synthase</shortName>
        <ecNumber evidence="1">2.6.99.2</ecNumber>
    </recommendedName>
</protein>
<reference key="1">
    <citation type="journal article" date="2012" name="Environ. Microbiol.">
        <title>The genome sequence of Desulfatibacillum alkenivorans AK-01: a blueprint for anaerobic alkane oxidation.</title>
        <authorList>
            <person name="Callaghan A.V."/>
            <person name="Morris B.E."/>
            <person name="Pereira I.A."/>
            <person name="McInerney M.J."/>
            <person name="Austin R.N."/>
            <person name="Groves J.T."/>
            <person name="Kukor J.J."/>
            <person name="Suflita J.M."/>
            <person name="Young L.Y."/>
            <person name="Zylstra G.J."/>
            <person name="Wawrik B."/>
        </authorList>
    </citation>
    <scope>NUCLEOTIDE SEQUENCE [LARGE SCALE GENOMIC DNA]</scope>
    <source>
        <strain>AK-01</strain>
    </source>
</reference>
<organism>
    <name type="scientific">Desulfatibacillum aliphaticivorans</name>
    <dbReference type="NCBI Taxonomy" id="218208"/>
    <lineage>
        <taxon>Bacteria</taxon>
        <taxon>Pseudomonadati</taxon>
        <taxon>Thermodesulfobacteriota</taxon>
        <taxon>Desulfobacteria</taxon>
        <taxon>Desulfobacterales</taxon>
        <taxon>Desulfatibacillaceae</taxon>
        <taxon>Desulfatibacillum</taxon>
    </lineage>
</organism>
<dbReference type="EC" id="2.6.99.2" evidence="1"/>
<dbReference type="EMBL" id="CP001322">
    <property type="protein sequence ID" value="ACL05016.1"/>
    <property type="molecule type" value="Genomic_DNA"/>
</dbReference>
<dbReference type="RefSeq" id="WP_015948074.1">
    <property type="nucleotide sequence ID" value="NC_011768.1"/>
</dbReference>
<dbReference type="SMR" id="B8FJ89"/>
<dbReference type="KEGG" id="dal:Dalk_3327"/>
<dbReference type="eggNOG" id="COG0854">
    <property type="taxonomic scope" value="Bacteria"/>
</dbReference>
<dbReference type="HOGENOM" id="CLU_074563_0_0_7"/>
<dbReference type="UniPathway" id="UPA00244">
    <property type="reaction ID" value="UER00313"/>
</dbReference>
<dbReference type="Proteomes" id="UP000000739">
    <property type="component" value="Chromosome"/>
</dbReference>
<dbReference type="GO" id="GO:0005829">
    <property type="term" value="C:cytosol"/>
    <property type="evidence" value="ECO:0007669"/>
    <property type="project" value="TreeGrafter"/>
</dbReference>
<dbReference type="GO" id="GO:0033856">
    <property type="term" value="F:pyridoxine 5'-phosphate synthase activity"/>
    <property type="evidence" value="ECO:0007669"/>
    <property type="project" value="UniProtKB-EC"/>
</dbReference>
<dbReference type="GO" id="GO:0008615">
    <property type="term" value="P:pyridoxine biosynthetic process"/>
    <property type="evidence" value="ECO:0007669"/>
    <property type="project" value="UniProtKB-UniRule"/>
</dbReference>
<dbReference type="CDD" id="cd00003">
    <property type="entry name" value="PNPsynthase"/>
    <property type="match status" value="1"/>
</dbReference>
<dbReference type="Gene3D" id="3.20.20.70">
    <property type="entry name" value="Aldolase class I"/>
    <property type="match status" value="1"/>
</dbReference>
<dbReference type="HAMAP" id="MF_00279">
    <property type="entry name" value="PdxJ"/>
    <property type="match status" value="1"/>
</dbReference>
<dbReference type="InterPro" id="IPR013785">
    <property type="entry name" value="Aldolase_TIM"/>
</dbReference>
<dbReference type="InterPro" id="IPR004569">
    <property type="entry name" value="PyrdxlP_synth_PdxJ"/>
</dbReference>
<dbReference type="InterPro" id="IPR036130">
    <property type="entry name" value="Pyridoxine-5'_phos_synth"/>
</dbReference>
<dbReference type="NCBIfam" id="TIGR00559">
    <property type="entry name" value="pdxJ"/>
    <property type="match status" value="1"/>
</dbReference>
<dbReference type="NCBIfam" id="NF003625">
    <property type="entry name" value="PRK05265.1-3"/>
    <property type="match status" value="1"/>
</dbReference>
<dbReference type="NCBIfam" id="NF003627">
    <property type="entry name" value="PRK05265.1-5"/>
    <property type="match status" value="1"/>
</dbReference>
<dbReference type="PANTHER" id="PTHR30456">
    <property type="entry name" value="PYRIDOXINE 5'-PHOSPHATE SYNTHASE"/>
    <property type="match status" value="1"/>
</dbReference>
<dbReference type="PANTHER" id="PTHR30456:SF0">
    <property type="entry name" value="PYRIDOXINE 5'-PHOSPHATE SYNTHASE"/>
    <property type="match status" value="1"/>
</dbReference>
<dbReference type="Pfam" id="PF03740">
    <property type="entry name" value="PdxJ"/>
    <property type="match status" value="1"/>
</dbReference>
<dbReference type="SUPFAM" id="SSF63892">
    <property type="entry name" value="Pyridoxine 5'-phosphate synthase"/>
    <property type="match status" value="1"/>
</dbReference>
<gene>
    <name evidence="1" type="primary">pdxJ</name>
    <name type="ordered locus">Dalk_3327</name>
</gene>
<keyword id="KW-0963">Cytoplasm</keyword>
<keyword id="KW-0664">Pyridoxine biosynthesis</keyword>
<keyword id="KW-1185">Reference proteome</keyword>
<keyword id="KW-0808">Transferase</keyword>